<reference key="1">
    <citation type="journal article" date="2005" name="Nature">
        <title>The genome of the social amoeba Dictyostelium discoideum.</title>
        <authorList>
            <person name="Eichinger L."/>
            <person name="Pachebat J.A."/>
            <person name="Gloeckner G."/>
            <person name="Rajandream M.A."/>
            <person name="Sucgang R."/>
            <person name="Berriman M."/>
            <person name="Song J."/>
            <person name="Olsen R."/>
            <person name="Szafranski K."/>
            <person name="Xu Q."/>
            <person name="Tunggal B."/>
            <person name="Kummerfeld S."/>
            <person name="Madera M."/>
            <person name="Konfortov B.A."/>
            <person name="Rivero F."/>
            <person name="Bankier A.T."/>
            <person name="Lehmann R."/>
            <person name="Hamlin N."/>
            <person name="Davies R."/>
            <person name="Gaudet P."/>
            <person name="Fey P."/>
            <person name="Pilcher K."/>
            <person name="Chen G."/>
            <person name="Saunders D."/>
            <person name="Sodergren E.J."/>
            <person name="Davis P."/>
            <person name="Kerhornou A."/>
            <person name="Nie X."/>
            <person name="Hall N."/>
            <person name="Anjard C."/>
            <person name="Hemphill L."/>
            <person name="Bason N."/>
            <person name="Farbrother P."/>
            <person name="Desany B."/>
            <person name="Just E."/>
            <person name="Morio T."/>
            <person name="Rost R."/>
            <person name="Churcher C.M."/>
            <person name="Cooper J."/>
            <person name="Haydock S."/>
            <person name="van Driessche N."/>
            <person name="Cronin A."/>
            <person name="Goodhead I."/>
            <person name="Muzny D.M."/>
            <person name="Mourier T."/>
            <person name="Pain A."/>
            <person name="Lu M."/>
            <person name="Harper D."/>
            <person name="Lindsay R."/>
            <person name="Hauser H."/>
            <person name="James K.D."/>
            <person name="Quiles M."/>
            <person name="Madan Babu M."/>
            <person name="Saito T."/>
            <person name="Buchrieser C."/>
            <person name="Wardroper A."/>
            <person name="Felder M."/>
            <person name="Thangavelu M."/>
            <person name="Johnson D."/>
            <person name="Knights A."/>
            <person name="Loulseged H."/>
            <person name="Mungall K.L."/>
            <person name="Oliver K."/>
            <person name="Price C."/>
            <person name="Quail M.A."/>
            <person name="Urushihara H."/>
            <person name="Hernandez J."/>
            <person name="Rabbinowitsch E."/>
            <person name="Steffen D."/>
            <person name="Sanders M."/>
            <person name="Ma J."/>
            <person name="Kohara Y."/>
            <person name="Sharp S."/>
            <person name="Simmonds M.N."/>
            <person name="Spiegler S."/>
            <person name="Tivey A."/>
            <person name="Sugano S."/>
            <person name="White B."/>
            <person name="Walker D."/>
            <person name="Woodward J.R."/>
            <person name="Winckler T."/>
            <person name="Tanaka Y."/>
            <person name="Shaulsky G."/>
            <person name="Schleicher M."/>
            <person name="Weinstock G.M."/>
            <person name="Rosenthal A."/>
            <person name="Cox E.C."/>
            <person name="Chisholm R.L."/>
            <person name="Gibbs R.A."/>
            <person name="Loomis W.F."/>
            <person name="Platzer M."/>
            <person name="Kay R.R."/>
            <person name="Williams J.G."/>
            <person name="Dear P.H."/>
            <person name="Noegel A.A."/>
            <person name="Barrell B.G."/>
            <person name="Kuspa A."/>
        </authorList>
    </citation>
    <scope>NUCLEOTIDE SEQUENCE [LARGE SCALE GENOMIC DNA]</scope>
    <source>
        <strain>AX4</strain>
    </source>
</reference>
<sequence length="533" mass="56918">MSAPAAAPAKVLPSRSDFDEKEKEKDVRTSNIVAARAVADAIRTSLGPKGMDKMIISPNNEVLISNDGATILQNLELRHPAAKMLAELAKAQDIEAGDGTTSVCVIAGSLLGAVSQLMAKGIHPSIISEAFNLALNKSLEVLVSMSVPVSLTDRVSLVKSATTSLNSKVVSQYTNLASIAVDAVLSVINPATAVNVNLKDIKLIKKLGGTIEDTELVQGLVFDQTASHTAGGPTRIQNAKIGLIQFCLSAPKTYMDNNIVVSDYSKMDKVIKEEPKLILEMCRKIQKSGCNVLLVQKSILRDAVNDLSLHYLAKLKILVIKDIERDDIEFICNTIGCQPVANIDSFTADKLGKADLVEEVGTSDGKIVKVTGIPNPGKTVTVLCRGSNKLVLDEAERSLHDALCVIRSLVKKKFLIAGGGAPEIEVSQQVTAFSKTLTGITSYCVRAYAEALEIIPYTLAENAGLHPISIVTELRNKHAQGEINSGINVRKGAITNILQENVVQPLLVSTSALTLATETVVMLLKIDDIATAR</sequence>
<accession>Q54CL2</accession>
<gene>
    <name type="primary">cct4</name>
    <name type="ORF">DDB_G0292872</name>
</gene>
<protein>
    <recommendedName>
        <fullName>T-complex protein 1 subunit delta</fullName>
        <shortName>TCP-1-delta</shortName>
    </recommendedName>
    <alternativeName>
        <fullName>CCT-delta</fullName>
    </alternativeName>
</protein>
<name>TCPD_DICDI</name>
<proteinExistence type="inferred from homology"/>
<feature type="chain" id="PRO_0000327382" description="T-complex protein 1 subunit delta">
    <location>
        <begin position="1"/>
        <end position="533"/>
    </location>
</feature>
<feature type="region of interest" description="Disordered" evidence="2">
    <location>
        <begin position="1"/>
        <end position="26"/>
    </location>
</feature>
<feature type="compositionally biased region" description="Basic and acidic residues" evidence="2">
    <location>
        <begin position="16"/>
        <end position="26"/>
    </location>
</feature>
<organism>
    <name type="scientific">Dictyostelium discoideum</name>
    <name type="common">Social amoeba</name>
    <dbReference type="NCBI Taxonomy" id="44689"/>
    <lineage>
        <taxon>Eukaryota</taxon>
        <taxon>Amoebozoa</taxon>
        <taxon>Evosea</taxon>
        <taxon>Eumycetozoa</taxon>
        <taxon>Dictyostelia</taxon>
        <taxon>Dictyosteliales</taxon>
        <taxon>Dictyosteliaceae</taxon>
        <taxon>Dictyostelium</taxon>
    </lineage>
</organism>
<dbReference type="EMBL" id="AAFI02000197">
    <property type="protein sequence ID" value="EAL60985.1"/>
    <property type="molecule type" value="Genomic_DNA"/>
</dbReference>
<dbReference type="RefSeq" id="XP_629404.1">
    <property type="nucleotide sequence ID" value="XM_629402.1"/>
</dbReference>
<dbReference type="SMR" id="Q54CL2"/>
<dbReference type="FunCoup" id="Q54CL2">
    <property type="interactions" value="1036"/>
</dbReference>
<dbReference type="STRING" id="44689.Q54CL2"/>
<dbReference type="PaxDb" id="44689-DDB0233993"/>
<dbReference type="EnsemblProtists" id="EAL60985">
    <property type="protein sequence ID" value="EAL60985"/>
    <property type="gene ID" value="DDB_G0292872"/>
</dbReference>
<dbReference type="GeneID" id="8628923"/>
<dbReference type="KEGG" id="ddi:DDB_G0292872"/>
<dbReference type="dictyBase" id="DDB_G0292872">
    <property type="gene designation" value="cct4"/>
</dbReference>
<dbReference type="VEuPathDB" id="AmoebaDB:DDB_G0292872"/>
<dbReference type="eggNOG" id="KOG0358">
    <property type="taxonomic scope" value="Eukaryota"/>
</dbReference>
<dbReference type="HOGENOM" id="CLU_008891_9_1_1"/>
<dbReference type="InParanoid" id="Q54CL2"/>
<dbReference type="OMA" id="HPAANMI"/>
<dbReference type="PhylomeDB" id="Q54CL2"/>
<dbReference type="BRENDA" id="3.6.4.B10">
    <property type="organism ID" value="1939"/>
</dbReference>
<dbReference type="Reactome" id="R-DDI-390471">
    <property type="pathway name" value="Association of TriC/CCT with target proteins during biosynthesis"/>
</dbReference>
<dbReference type="Reactome" id="R-DDI-6814122">
    <property type="pathway name" value="Cooperation of PDCL (PhLP1) and TRiC/CCT in G-protein beta folding"/>
</dbReference>
<dbReference type="PRO" id="PR:Q54CL2"/>
<dbReference type="Proteomes" id="UP000002195">
    <property type="component" value="Chromosome 6"/>
</dbReference>
<dbReference type="GO" id="GO:0005832">
    <property type="term" value="C:chaperonin-containing T-complex"/>
    <property type="evidence" value="ECO:0000250"/>
    <property type="project" value="dictyBase"/>
</dbReference>
<dbReference type="GO" id="GO:0005524">
    <property type="term" value="F:ATP binding"/>
    <property type="evidence" value="ECO:0007669"/>
    <property type="project" value="UniProtKB-KW"/>
</dbReference>
<dbReference type="GO" id="GO:0016887">
    <property type="term" value="F:ATP hydrolysis activity"/>
    <property type="evidence" value="ECO:0007669"/>
    <property type="project" value="InterPro"/>
</dbReference>
<dbReference type="GO" id="GO:0140662">
    <property type="term" value="F:ATP-dependent protein folding chaperone"/>
    <property type="evidence" value="ECO:0007669"/>
    <property type="project" value="InterPro"/>
</dbReference>
<dbReference type="GO" id="GO:0051082">
    <property type="term" value="F:unfolded protein binding"/>
    <property type="evidence" value="ECO:0000318"/>
    <property type="project" value="GO_Central"/>
</dbReference>
<dbReference type="GO" id="GO:0006457">
    <property type="term" value="P:protein folding"/>
    <property type="evidence" value="ECO:0000318"/>
    <property type="project" value="GO_Central"/>
</dbReference>
<dbReference type="CDD" id="cd03338">
    <property type="entry name" value="TCP1_delta"/>
    <property type="match status" value="1"/>
</dbReference>
<dbReference type="FunFam" id="3.50.7.10:FF:000010">
    <property type="entry name" value="T-complex protein 1 subunit delta"/>
    <property type="match status" value="1"/>
</dbReference>
<dbReference type="Gene3D" id="3.50.7.10">
    <property type="entry name" value="GroEL"/>
    <property type="match status" value="1"/>
</dbReference>
<dbReference type="Gene3D" id="1.10.560.10">
    <property type="entry name" value="GroEL-like equatorial domain"/>
    <property type="match status" value="1"/>
</dbReference>
<dbReference type="Gene3D" id="3.30.260.10">
    <property type="entry name" value="TCP-1-like chaperonin intermediate domain"/>
    <property type="match status" value="1"/>
</dbReference>
<dbReference type="InterPro" id="IPR012717">
    <property type="entry name" value="Chap_CCT_delta"/>
</dbReference>
<dbReference type="InterPro" id="IPR017998">
    <property type="entry name" value="Chaperone_TCP-1"/>
</dbReference>
<dbReference type="InterPro" id="IPR002194">
    <property type="entry name" value="Chaperonin_TCP-1_CS"/>
</dbReference>
<dbReference type="InterPro" id="IPR002423">
    <property type="entry name" value="Cpn60/GroEL/TCP-1"/>
</dbReference>
<dbReference type="InterPro" id="IPR027409">
    <property type="entry name" value="GroEL-like_apical_dom_sf"/>
</dbReference>
<dbReference type="InterPro" id="IPR027413">
    <property type="entry name" value="GROEL-like_equatorial_sf"/>
</dbReference>
<dbReference type="InterPro" id="IPR027410">
    <property type="entry name" value="TCP-1-like_intermed_sf"/>
</dbReference>
<dbReference type="InterPro" id="IPR053374">
    <property type="entry name" value="TCP-1_chaperonin"/>
</dbReference>
<dbReference type="InterPro" id="IPR054827">
    <property type="entry name" value="thermosome_alpha"/>
</dbReference>
<dbReference type="NCBIfam" id="TIGR02342">
    <property type="entry name" value="chap_CCT_delta"/>
    <property type="match status" value="1"/>
</dbReference>
<dbReference type="NCBIfam" id="NF041082">
    <property type="entry name" value="thermosome_alpha"/>
    <property type="match status" value="1"/>
</dbReference>
<dbReference type="NCBIfam" id="NF041083">
    <property type="entry name" value="thermosome_beta"/>
    <property type="match status" value="1"/>
</dbReference>
<dbReference type="PANTHER" id="PTHR11353">
    <property type="entry name" value="CHAPERONIN"/>
    <property type="match status" value="1"/>
</dbReference>
<dbReference type="Pfam" id="PF00118">
    <property type="entry name" value="Cpn60_TCP1"/>
    <property type="match status" value="1"/>
</dbReference>
<dbReference type="PRINTS" id="PR00304">
    <property type="entry name" value="TCOMPLEXTCP1"/>
</dbReference>
<dbReference type="SUPFAM" id="SSF52029">
    <property type="entry name" value="GroEL apical domain-like"/>
    <property type="match status" value="1"/>
</dbReference>
<dbReference type="SUPFAM" id="SSF48592">
    <property type="entry name" value="GroEL equatorial domain-like"/>
    <property type="match status" value="1"/>
</dbReference>
<dbReference type="SUPFAM" id="SSF54849">
    <property type="entry name" value="GroEL-intermediate domain like"/>
    <property type="match status" value="1"/>
</dbReference>
<dbReference type="PROSITE" id="PS00750">
    <property type="entry name" value="TCP1_1"/>
    <property type="match status" value="1"/>
</dbReference>
<dbReference type="PROSITE" id="PS00751">
    <property type="entry name" value="TCP1_2"/>
    <property type="match status" value="1"/>
</dbReference>
<dbReference type="PROSITE" id="PS00995">
    <property type="entry name" value="TCP1_3"/>
    <property type="match status" value="1"/>
</dbReference>
<keyword id="KW-0067">ATP-binding</keyword>
<keyword id="KW-0143">Chaperone</keyword>
<keyword id="KW-0963">Cytoplasm</keyword>
<keyword id="KW-0547">Nucleotide-binding</keyword>
<keyword id="KW-1185">Reference proteome</keyword>
<evidence type="ECO:0000250" key="1"/>
<evidence type="ECO:0000256" key="2">
    <source>
        <dbReference type="SAM" id="MobiDB-lite"/>
    </source>
</evidence>
<evidence type="ECO:0000305" key="3"/>
<comment type="function">
    <text evidence="1">Molecular chaperone; assists the folding of proteins upon ATP hydrolysis. Known to play a role, in vitro, in the folding of actin and tubulin (By similarity).</text>
</comment>
<comment type="subunit">
    <text evidence="1">Heterooligomeric complex of about 850 to 900 kDa that forms two stacked rings, 12 to 16 nm in diameter.</text>
</comment>
<comment type="subcellular location">
    <subcellularLocation>
        <location evidence="1">Cytoplasm</location>
    </subcellularLocation>
</comment>
<comment type="similarity">
    <text evidence="3">Belongs to the TCP-1 chaperonin family.</text>
</comment>